<sequence>MGLSTLEQKLTEMITAPVEALGFELVGIEFIRGRTSTLRIYIDSEDGINVDDCADVSHQVSAVLDVEDPITVAYNLEVSSPGLDRPLFTAEHYARFVGEEVTLVLRMAVQNRRKWQGVIKAVDGEMITVTVEGKDEVFALSNIQKANLVPHF</sequence>
<accession>B7UJ65</accession>
<evidence type="ECO:0000255" key="1">
    <source>
        <dbReference type="HAMAP-Rule" id="MF_01077"/>
    </source>
</evidence>
<evidence type="ECO:0000305" key="2"/>
<comment type="function">
    <text evidence="1">Required for maturation of 30S ribosomal subunits.</text>
</comment>
<comment type="subcellular location">
    <subcellularLocation>
        <location evidence="1">Cytoplasm</location>
    </subcellularLocation>
</comment>
<comment type="similarity">
    <text evidence="1">Belongs to the RimP family.</text>
</comment>
<comment type="sequence caution" evidence="2">
    <conflict type="erroneous initiation">
        <sequence resource="EMBL-CDS" id="CAS10999"/>
    </conflict>
</comment>
<protein>
    <recommendedName>
        <fullName evidence="1">Ribosome maturation factor RimP</fullName>
    </recommendedName>
</protein>
<keyword id="KW-0963">Cytoplasm</keyword>
<keyword id="KW-1185">Reference proteome</keyword>
<keyword id="KW-0690">Ribosome biogenesis</keyword>
<feature type="chain" id="PRO_0000384656" description="Ribosome maturation factor RimP">
    <location>
        <begin position="1"/>
        <end position="152"/>
    </location>
</feature>
<reference key="1">
    <citation type="journal article" date="2009" name="J. Bacteriol.">
        <title>Complete genome sequence and comparative genome analysis of enteropathogenic Escherichia coli O127:H6 strain E2348/69.</title>
        <authorList>
            <person name="Iguchi A."/>
            <person name="Thomson N.R."/>
            <person name="Ogura Y."/>
            <person name="Saunders D."/>
            <person name="Ooka T."/>
            <person name="Henderson I.R."/>
            <person name="Harris D."/>
            <person name="Asadulghani M."/>
            <person name="Kurokawa K."/>
            <person name="Dean P."/>
            <person name="Kenny B."/>
            <person name="Quail M.A."/>
            <person name="Thurston S."/>
            <person name="Dougan G."/>
            <person name="Hayashi T."/>
            <person name="Parkhill J."/>
            <person name="Frankel G."/>
        </authorList>
    </citation>
    <scope>NUCLEOTIDE SEQUENCE [LARGE SCALE GENOMIC DNA]</scope>
    <source>
        <strain>E2348/69 / EPEC</strain>
    </source>
</reference>
<gene>
    <name evidence="1" type="primary">rimP</name>
    <name type="ordered locus">E2348C_3451</name>
</gene>
<dbReference type="EMBL" id="FM180568">
    <property type="protein sequence ID" value="CAS10999.1"/>
    <property type="status" value="ALT_INIT"/>
    <property type="molecule type" value="Genomic_DNA"/>
</dbReference>
<dbReference type="SMR" id="B7UJ65"/>
<dbReference type="KEGG" id="ecg:E2348C_3451"/>
<dbReference type="HOGENOM" id="CLU_070525_1_1_6"/>
<dbReference type="Proteomes" id="UP000008205">
    <property type="component" value="Chromosome"/>
</dbReference>
<dbReference type="GO" id="GO:0005829">
    <property type="term" value="C:cytosol"/>
    <property type="evidence" value="ECO:0007669"/>
    <property type="project" value="TreeGrafter"/>
</dbReference>
<dbReference type="GO" id="GO:0000028">
    <property type="term" value="P:ribosomal small subunit assembly"/>
    <property type="evidence" value="ECO:0007669"/>
    <property type="project" value="TreeGrafter"/>
</dbReference>
<dbReference type="GO" id="GO:0006412">
    <property type="term" value="P:translation"/>
    <property type="evidence" value="ECO:0007669"/>
    <property type="project" value="TreeGrafter"/>
</dbReference>
<dbReference type="CDD" id="cd01734">
    <property type="entry name" value="YlxS_C"/>
    <property type="match status" value="1"/>
</dbReference>
<dbReference type="FunFam" id="2.30.30.180:FF:000001">
    <property type="entry name" value="Ribosome maturation factor RimP"/>
    <property type="match status" value="1"/>
</dbReference>
<dbReference type="FunFam" id="3.30.300.70:FF:000001">
    <property type="entry name" value="Ribosome maturation factor RimP"/>
    <property type="match status" value="1"/>
</dbReference>
<dbReference type="Gene3D" id="2.30.30.180">
    <property type="entry name" value="Ribosome maturation factor RimP, C-terminal domain"/>
    <property type="match status" value="1"/>
</dbReference>
<dbReference type="Gene3D" id="3.30.300.70">
    <property type="entry name" value="RimP-like superfamily, N-terminal"/>
    <property type="match status" value="1"/>
</dbReference>
<dbReference type="HAMAP" id="MF_01077">
    <property type="entry name" value="RimP"/>
    <property type="match status" value="1"/>
</dbReference>
<dbReference type="InterPro" id="IPR003728">
    <property type="entry name" value="Ribosome_maturation_RimP"/>
</dbReference>
<dbReference type="InterPro" id="IPR028998">
    <property type="entry name" value="RimP_C"/>
</dbReference>
<dbReference type="InterPro" id="IPR036847">
    <property type="entry name" value="RimP_C_sf"/>
</dbReference>
<dbReference type="InterPro" id="IPR028989">
    <property type="entry name" value="RimP_N"/>
</dbReference>
<dbReference type="InterPro" id="IPR035956">
    <property type="entry name" value="RimP_N_sf"/>
</dbReference>
<dbReference type="NCBIfam" id="NF000927">
    <property type="entry name" value="PRK00092.1-1"/>
    <property type="match status" value="1"/>
</dbReference>
<dbReference type="PANTHER" id="PTHR33867">
    <property type="entry name" value="RIBOSOME MATURATION FACTOR RIMP"/>
    <property type="match status" value="1"/>
</dbReference>
<dbReference type="PANTHER" id="PTHR33867:SF1">
    <property type="entry name" value="RIBOSOME MATURATION FACTOR RIMP"/>
    <property type="match status" value="1"/>
</dbReference>
<dbReference type="Pfam" id="PF17384">
    <property type="entry name" value="DUF150_C"/>
    <property type="match status" value="1"/>
</dbReference>
<dbReference type="Pfam" id="PF02576">
    <property type="entry name" value="RimP_N"/>
    <property type="match status" value="1"/>
</dbReference>
<dbReference type="SUPFAM" id="SSF74942">
    <property type="entry name" value="YhbC-like, C-terminal domain"/>
    <property type="match status" value="1"/>
</dbReference>
<dbReference type="SUPFAM" id="SSF75420">
    <property type="entry name" value="YhbC-like, N-terminal domain"/>
    <property type="match status" value="1"/>
</dbReference>
<proteinExistence type="inferred from homology"/>
<organism>
    <name type="scientific">Escherichia coli O127:H6 (strain E2348/69 / EPEC)</name>
    <dbReference type="NCBI Taxonomy" id="574521"/>
    <lineage>
        <taxon>Bacteria</taxon>
        <taxon>Pseudomonadati</taxon>
        <taxon>Pseudomonadota</taxon>
        <taxon>Gammaproteobacteria</taxon>
        <taxon>Enterobacterales</taxon>
        <taxon>Enterobacteriaceae</taxon>
        <taxon>Escherichia</taxon>
    </lineage>
</organism>
<name>RIMP_ECO27</name>